<evidence type="ECO:0000255" key="1"/>
<evidence type="ECO:0000305" key="2"/>
<organism>
    <name type="scientific">Dictyostelium discoideum</name>
    <name type="common">Social amoeba</name>
    <dbReference type="NCBI Taxonomy" id="44689"/>
    <lineage>
        <taxon>Eukaryota</taxon>
        <taxon>Amoebozoa</taxon>
        <taxon>Evosea</taxon>
        <taxon>Eumycetozoa</taxon>
        <taxon>Dictyostelia</taxon>
        <taxon>Dictyosteliales</taxon>
        <taxon>Dictyosteliaceae</taxon>
        <taxon>Dictyostelium</taxon>
    </lineage>
</organism>
<comment type="subcellular location">
    <subcellularLocation>
        <location evidence="2">Membrane</location>
        <topology evidence="2">Single-pass membrane protein</topology>
    </subcellularLocation>
</comment>
<feature type="chain" id="PRO_0000352475" description="Putative uncharacterized protein DDB_G0280355">
    <location>
        <begin position="1"/>
        <end position="55"/>
    </location>
</feature>
<feature type="transmembrane region" description="Helical" evidence="1">
    <location>
        <begin position="24"/>
        <end position="46"/>
    </location>
</feature>
<protein>
    <recommendedName>
        <fullName>Putative uncharacterized protein DDB_G0280355</fullName>
    </recommendedName>
</protein>
<gene>
    <name type="ORF">DDB_G0280355</name>
</gene>
<keyword id="KW-0472">Membrane</keyword>
<keyword id="KW-1185">Reference proteome</keyword>
<keyword id="KW-0812">Transmembrane</keyword>
<keyword id="KW-1133">Transmembrane helix</keyword>
<sequence length="55" mass="6774">MSFNKTTLFLLFKKIKINITPTTLFIIFFTYSYYYCGFLQSFNYIIYKIYLNKNK</sequence>
<name>Y6537_DICDI</name>
<reference key="1">
    <citation type="journal article" date="2005" name="Nature">
        <title>The genome of the social amoeba Dictyostelium discoideum.</title>
        <authorList>
            <person name="Eichinger L."/>
            <person name="Pachebat J.A."/>
            <person name="Gloeckner G."/>
            <person name="Rajandream M.A."/>
            <person name="Sucgang R."/>
            <person name="Berriman M."/>
            <person name="Song J."/>
            <person name="Olsen R."/>
            <person name="Szafranski K."/>
            <person name="Xu Q."/>
            <person name="Tunggal B."/>
            <person name="Kummerfeld S."/>
            <person name="Madera M."/>
            <person name="Konfortov B.A."/>
            <person name="Rivero F."/>
            <person name="Bankier A.T."/>
            <person name="Lehmann R."/>
            <person name="Hamlin N."/>
            <person name="Davies R."/>
            <person name="Gaudet P."/>
            <person name="Fey P."/>
            <person name="Pilcher K."/>
            <person name="Chen G."/>
            <person name="Saunders D."/>
            <person name="Sodergren E.J."/>
            <person name="Davis P."/>
            <person name="Kerhornou A."/>
            <person name="Nie X."/>
            <person name="Hall N."/>
            <person name="Anjard C."/>
            <person name="Hemphill L."/>
            <person name="Bason N."/>
            <person name="Farbrother P."/>
            <person name="Desany B."/>
            <person name="Just E."/>
            <person name="Morio T."/>
            <person name="Rost R."/>
            <person name="Churcher C.M."/>
            <person name="Cooper J."/>
            <person name="Haydock S."/>
            <person name="van Driessche N."/>
            <person name="Cronin A."/>
            <person name="Goodhead I."/>
            <person name="Muzny D.M."/>
            <person name="Mourier T."/>
            <person name="Pain A."/>
            <person name="Lu M."/>
            <person name="Harper D."/>
            <person name="Lindsay R."/>
            <person name="Hauser H."/>
            <person name="James K.D."/>
            <person name="Quiles M."/>
            <person name="Madan Babu M."/>
            <person name="Saito T."/>
            <person name="Buchrieser C."/>
            <person name="Wardroper A."/>
            <person name="Felder M."/>
            <person name="Thangavelu M."/>
            <person name="Johnson D."/>
            <person name="Knights A."/>
            <person name="Loulseged H."/>
            <person name="Mungall K.L."/>
            <person name="Oliver K."/>
            <person name="Price C."/>
            <person name="Quail M.A."/>
            <person name="Urushihara H."/>
            <person name="Hernandez J."/>
            <person name="Rabbinowitsch E."/>
            <person name="Steffen D."/>
            <person name="Sanders M."/>
            <person name="Ma J."/>
            <person name="Kohara Y."/>
            <person name="Sharp S."/>
            <person name="Simmonds M.N."/>
            <person name="Spiegler S."/>
            <person name="Tivey A."/>
            <person name="Sugano S."/>
            <person name="White B."/>
            <person name="Walker D."/>
            <person name="Woodward J.R."/>
            <person name="Winckler T."/>
            <person name="Tanaka Y."/>
            <person name="Shaulsky G."/>
            <person name="Schleicher M."/>
            <person name="Weinstock G.M."/>
            <person name="Rosenthal A."/>
            <person name="Cox E.C."/>
            <person name="Chisholm R.L."/>
            <person name="Gibbs R.A."/>
            <person name="Loomis W.F."/>
            <person name="Platzer M."/>
            <person name="Kay R.R."/>
            <person name="Williams J.G."/>
            <person name="Dear P.H."/>
            <person name="Noegel A.A."/>
            <person name="Barrell B.G."/>
            <person name="Kuspa A."/>
        </authorList>
    </citation>
    <scope>NUCLEOTIDE SEQUENCE [LARGE SCALE GENOMIC DNA]</scope>
    <source>
        <strain>AX4</strain>
    </source>
</reference>
<accession>Q54VF9</accession>
<proteinExistence type="predicted"/>
<dbReference type="EMBL" id="AAFI02000035">
    <property type="protein sequence ID" value="EAL67404.1"/>
    <property type="molecule type" value="Genomic_DNA"/>
</dbReference>
<dbReference type="RefSeq" id="XP_641396.1">
    <property type="nucleotide sequence ID" value="XM_636304.1"/>
</dbReference>
<dbReference type="PaxDb" id="44689-DDB0206537"/>
<dbReference type="EnsemblProtists" id="EAL67404">
    <property type="protein sequence ID" value="EAL67404"/>
    <property type="gene ID" value="DDB_G0280355"/>
</dbReference>
<dbReference type="GeneID" id="8622530"/>
<dbReference type="KEGG" id="ddi:DDB_G0280355"/>
<dbReference type="HOGENOM" id="CLU_3036380_0_0_1"/>
<dbReference type="InParanoid" id="Q54VF9"/>
<dbReference type="PRO" id="PR:Q54VF9"/>
<dbReference type="Proteomes" id="UP000002195">
    <property type="component" value="Chromosome 3"/>
</dbReference>
<dbReference type="GO" id="GO:0016020">
    <property type="term" value="C:membrane"/>
    <property type="evidence" value="ECO:0007669"/>
    <property type="project" value="UniProtKB-SubCell"/>
</dbReference>